<comment type="function">
    <text evidence="1">Catalyzes the reversible isomerization-deamination of glucosamine 6-phosphate (GlcN6P) to form fructose 6-phosphate (Fru6P) and ammonium ion.</text>
</comment>
<comment type="catalytic activity">
    <reaction evidence="1">
        <text>alpha-D-glucosamine 6-phosphate + H2O = beta-D-fructose 6-phosphate + NH4(+)</text>
        <dbReference type="Rhea" id="RHEA:12172"/>
        <dbReference type="ChEBI" id="CHEBI:15377"/>
        <dbReference type="ChEBI" id="CHEBI:28938"/>
        <dbReference type="ChEBI" id="CHEBI:57634"/>
        <dbReference type="ChEBI" id="CHEBI:75989"/>
        <dbReference type="EC" id="3.5.99.6"/>
    </reaction>
</comment>
<comment type="pathway">
    <text evidence="1">Amino-sugar metabolism; N-acetylneuraminate degradation; D-fructose 6-phosphate from N-acetylneuraminate: step 5/5.</text>
</comment>
<comment type="similarity">
    <text evidence="1">Belongs to the glucosamine/galactosamine-6-phosphate isomerase family. NagB subfamily.</text>
</comment>
<sequence length="237" mass="26085">MKWIEVNTYDEMSEVAANIFLKQIQKKPNSVLGLATGGSPVGMYKELVARYQAGQLTFKDVQTFNLDEYVGLKRSSPASYWTFMHNNLFNGVNIKQENIHLPNGEAEDLAAECKAYDARIDAAGGIDLQLLGIGVNGHIGFNEPGTPFDSMTNIVELTESTRTENAIYFDDAADVPIHAITMGIQSIMKAKEIVLIAFGEKKMEAIQKLKSGHITEDFPASQLLKHPNVTIIYGGTN</sequence>
<reference key="1">
    <citation type="journal article" date="2008" name="J. Bacteriol.">
        <title>Complete genome sequence of the mosquitocidal bacterium Bacillus sphaericus C3-41 and comparison with those of closely related Bacillus species.</title>
        <authorList>
            <person name="Hu X."/>
            <person name="Fan W."/>
            <person name="Han B."/>
            <person name="Liu H."/>
            <person name="Zheng D."/>
            <person name="Li Q."/>
            <person name="Dong W."/>
            <person name="Yan J."/>
            <person name="Gao M."/>
            <person name="Berry C."/>
            <person name="Yuan Z."/>
        </authorList>
    </citation>
    <scope>NUCLEOTIDE SEQUENCE [LARGE SCALE GENOMIC DNA]</scope>
    <source>
        <strain>C3-41</strain>
    </source>
</reference>
<gene>
    <name evidence="1" type="primary">nagB</name>
    <name type="ordered locus">Bsph_0351</name>
</gene>
<dbReference type="EC" id="3.5.99.6" evidence="1"/>
<dbReference type="EMBL" id="CP000817">
    <property type="protein sequence ID" value="ACA37978.1"/>
    <property type="molecule type" value="Genomic_DNA"/>
</dbReference>
<dbReference type="RefSeq" id="WP_012292138.1">
    <property type="nucleotide sequence ID" value="NC_010382.1"/>
</dbReference>
<dbReference type="SMR" id="B1HUU8"/>
<dbReference type="EnsemblBacteria" id="ACA37978">
    <property type="protein sequence ID" value="ACA37978"/>
    <property type="gene ID" value="Bsph_0351"/>
</dbReference>
<dbReference type="KEGG" id="lsp:Bsph_0351"/>
<dbReference type="HOGENOM" id="CLU_049611_1_1_9"/>
<dbReference type="UniPathway" id="UPA00629">
    <property type="reaction ID" value="UER00684"/>
</dbReference>
<dbReference type="Proteomes" id="UP000002164">
    <property type="component" value="Chromosome"/>
</dbReference>
<dbReference type="GO" id="GO:0005737">
    <property type="term" value="C:cytoplasm"/>
    <property type="evidence" value="ECO:0007669"/>
    <property type="project" value="TreeGrafter"/>
</dbReference>
<dbReference type="GO" id="GO:0004342">
    <property type="term" value="F:glucosamine-6-phosphate deaminase activity"/>
    <property type="evidence" value="ECO:0007669"/>
    <property type="project" value="UniProtKB-UniRule"/>
</dbReference>
<dbReference type="GO" id="GO:0042802">
    <property type="term" value="F:identical protein binding"/>
    <property type="evidence" value="ECO:0007669"/>
    <property type="project" value="TreeGrafter"/>
</dbReference>
<dbReference type="GO" id="GO:0005975">
    <property type="term" value="P:carbohydrate metabolic process"/>
    <property type="evidence" value="ECO:0007669"/>
    <property type="project" value="InterPro"/>
</dbReference>
<dbReference type="GO" id="GO:0006043">
    <property type="term" value="P:glucosamine catabolic process"/>
    <property type="evidence" value="ECO:0007669"/>
    <property type="project" value="TreeGrafter"/>
</dbReference>
<dbReference type="GO" id="GO:0006046">
    <property type="term" value="P:N-acetylglucosamine catabolic process"/>
    <property type="evidence" value="ECO:0007669"/>
    <property type="project" value="TreeGrafter"/>
</dbReference>
<dbReference type="GO" id="GO:0019262">
    <property type="term" value="P:N-acetylneuraminate catabolic process"/>
    <property type="evidence" value="ECO:0007669"/>
    <property type="project" value="UniProtKB-UniRule"/>
</dbReference>
<dbReference type="CDD" id="cd01399">
    <property type="entry name" value="GlcN6P_deaminase"/>
    <property type="match status" value="1"/>
</dbReference>
<dbReference type="FunFam" id="3.40.50.1360:FF:000003">
    <property type="entry name" value="Glucosamine-6-phosphate deaminase"/>
    <property type="match status" value="1"/>
</dbReference>
<dbReference type="Gene3D" id="3.40.50.1360">
    <property type="match status" value="1"/>
</dbReference>
<dbReference type="HAMAP" id="MF_01241">
    <property type="entry name" value="GlcN6P_deamin"/>
    <property type="match status" value="1"/>
</dbReference>
<dbReference type="InterPro" id="IPR006148">
    <property type="entry name" value="Glc/Gal-6P_isomerase"/>
</dbReference>
<dbReference type="InterPro" id="IPR004547">
    <property type="entry name" value="Glucosamine6P_isomerase"/>
</dbReference>
<dbReference type="InterPro" id="IPR018321">
    <property type="entry name" value="Glucosamine6P_isomerase_CS"/>
</dbReference>
<dbReference type="InterPro" id="IPR037171">
    <property type="entry name" value="NagB/RpiA_transferase-like"/>
</dbReference>
<dbReference type="NCBIfam" id="TIGR00502">
    <property type="entry name" value="nagB"/>
    <property type="match status" value="1"/>
</dbReference>
<dbReference type="PANTHER" id="PTHR11280">
    <property type="entry name" value="GLUCOSAMINE-6-PHOSPHATE ISOMERASE"/>
    <property type="match status" value="1"/>
</dbReference>
<dbReference type="PANTHER" id="PTHR11280:SF5">
    <property type="entry name" value="GLUCOSAMINE-6-PHOSPHATE ISOMERASE"/>
    <property type="match status" value="1"/>
</dbReference>
<dbReference type="Pfam" id="PF01182">
    <property type="entry name" value="Glucosamine_iso"/>
    <property type="match status" value="1"/>
</dbReference>
<dbReference type="SUPFAM" id="SSF100950">
    <property type="entry name" value="NagB/RpiA/CoA transferase-like"/>
    <property type="match status" value="1"/>
</dbReference>
<dbReference type="PROSITE" id="PS01161">
    <property type="entry name" value="GLC_GALNAC_ISOMERASE"/>
    <property type="match status" value="1"/>
</dbReference>
<organism>
    <name type="scientific">Lysinibacillus sphaericus (strain C3-41)</name>
    <dbReference type="NCBI Taxonomy" id="444177"/>
    <lineage>
        <taxon>Bacteria</taxon>
        <taxon>Bacillati</taxon>
        <taxon>Bacillota</taxon>
        <taxon>Bacilli</taxon>
        <taxon>Bacillales</taxon>
        <taxon>Bacillaceae</taxon>
        <taxon>Lysinibacillus</taxon>
    </lineage>
</organism>
<accession>B1HUU8</accession>
<feature type="chain" id="PRO_1000139781" description="Glucosamine-6-phosphate deaminase">
    <location>
        <begin position="1"/>
        <end position="237"/>
    </location>
</feature>
<feature type="active site" description="Proton acceptor; for enolization step" evidence="1">
    <location>
        <position position="67"/>
    </location>
</feature>
<feature type="active site" description="For ring-opening step" evidence="1">
    <location>
        <position position="136"/>
    </location>
</feature>
<feature type="active site" description="Proton acceptor; for ring-opening step" evidence="1">
    <location>
        <position position="138"/>
    </location>
</feature>
<feature type="active site" description="For ring-opening step" evidence="1">
    <location>
        <position position="143"/>
    </location>
</feature>
<evidence type="ECO:0000255" key="1">
    <source>
        <dbReference type="HAMAP-Rule" id="MF_01241"/>
    </source>
</evidence>
<name>NAGB_LYSSC</name>
<protein>
    <recommendedName>
        <fullName evidence="1">Glucosamine-6-phosphate deaminase</fullName>
        <ecNumber evidence="1">3.5.99.6</ecNumber>
    </recommendedName>
    <alternativeName>
        <fullName evidence="1">GlcN6P deaminase</fullName>
        <shortName evidence="1">GNPDA</shortName>
    </alternativeName>
    <alternativeName>
        <fullName evidence="1">Glucosamine-6-phosphate isomerase</fullName>
    </alternativeName>
</protein>
<keyword id="KW-0119">Carbohydrate metabolism</keyword>
<keyword id="KW-0378">Hydrolase</keyword>
<proteinExistence type="inferred from homology"/>